<accession>A0KJ66</accession>
<dbReference type="EC" id="7.1.1.-" evidence="1"/>
<dbReference type="EMBL" id="CP000462">
    <property type="protein sequence ID" value="ABK37629.1"/>
    <property type="molecule type" value="Genomic_DNA"/>
</dbReference>
<dbReference type="RefSeq" id="WP_005299840.1">
    <property type="nucleotide sequence ID" value="NC_008570.1"/>
</dbReference>
<dbReference type="RefSeq" id="YP_856317.1">
    <property type="nucleotide sequence ID" value="NC_008570.1"/>
</dbReference>
<dbReference type="SMR" id="A0KJ66"/>
<dbReference type="STRING" id="380703.AHA_1781"/>
<dbReference type="EnsemblBacteria" id="ABK37629">
    <property type="protein sequence ID" value="ABK37629"/>
    <property type="gene ID" value="AHA_1781"/>
</dbReference>
<dbReference type="KEGG" id="aha:AHA_1781"/>
<dbReference type="PATRIC" id="fig|380703.7.peg.1797"/>
<dbReference type="eggNOG" id="COG0377">
    <property type="taxonomic scope" value="Bacteria"/>
</dbReference>
<dbReference type="HOGENOM" id="CLU_055737_7_3_6"/>
<dbReference type="OrthoDB" id="9786737at2"/>
<dbReference type="PRO" id="PR:A0KJ66"/>
<dbReference type="Proteomes" id="UP000000756">
    <property type="component" value="Chromosome"/>
</dbReference>
<dbReference type="GO" id="GO:0005886">
    <property type="term" value="C:plasma membrane"/>
    <property type="evidence" value="ECO:0007669"/>
    <property type="project" value="UniProtKB-SubCell"/>
</dbReference>
<dbReference type="GO" id="GO:0045271">
    <property type="term" value="C:respiratory chain complex I"/>
    <property type="evidence" value="ECO:0007669"/>
    <property type="project" value="TreeGrafter"/>
</dbReference>
<dbReference type="GO" id="GO:0051539">
    <property type="term" value="F:4 iron, 4 sulfur cluster binding"/>
    <property type="evidence" value="ECO:0007669"/>
    <property type="project" value="UniProtKB-KW"/>
</dbReference>
<dbReference type="GO" id="GO:0005506">
    <property type="term" value="F:iron ion binding"/>
    <property type="evidence" value="ECO:0007669"/>
    <property type="project" value="UniProtKB-UniRule"/>
</dbReference>
<dbReference type="GO" id="GO:0008137">
    <property type="term" value="F:NADH dehydrogenase (ubiquinone) activity"/>
    <property type="evidence" value="ECO:0007669"/>
    <property type="project" value="InterPro"/>
</dbReference>
<dbReference type="GO" id="GO:0050136">
    <property type="term" value="F:NADH:ubiquinone reductase (non-electrogenic) activity"/>
    <property type="evidence" value="ECO:0007669"/>
    <property type="project" value="UniProtKB-UniRule"/>
</dbReference>
<dbReference type="GO" id="GO:0048038">
    <property type="term" value="F:quinone binding"/>
    <property type="evidence" value="ECO:0007669"/>
    <property type="project" value="UniProtKB-KW"/>
</dbReference>
<dbReference type="GO" id="GO:0009060">
    <property type="term" value="P:aerobic respiration"/>
    <property type="evidence" value="ECO:0007669"/>
    <property type="project" value="TreeGrafter"/>
</dbReference>
<dbReference type="GO" id="GO:0015990">
    <property type="term" value="P:electron transport coupled proton transport"/>
    <property type="evidence" value="ECO:0007669"/>
    <property type="project" value="TreeGrafter"/>
</dbReference>
<dbReference type="FunFam" id="3.40.50.12280:FF:000002">
    <property type="entry name" value="NADH-quinone oxidoreductase subunit B"/>
    <property type="match status" value="1"/>
</dbReference>
<dbReference type="Gene3D" id="3.40.50.12280">
    <property type="match status" value="1"/>
</dbReference>
<dbReference type="HAMAP" id="MF_01356">
    <property type="entry name" value="NDH1_NuoB"/>
    <property type="match status" value="1"/>
</dbReference>
<dbReference type="InterPro" id="IPR006137">
    <property type="entry name" value="NADH_UbQ_OxRdtase-like_20kDa"/>
</dbReference>
<dbReference type="InterPro" id="IPR006138">
    <property type="entry name" value="NADH_UQ_OxRdtase_20Kd_su"/>
</dbReference>
<dbReference type="NCBIfam" id="TIGR01957">
    <property type="entry name" value="nuoB_fam"/>
    <property type="match status" value="1"/>
</dbReference>
<dbReference type="NCBIfam" id="NF005012">
    <property type="entry name" value="PRK06411.1"/>
    <property type="match status" value="1"/>
</dbReference>
<dbReference type="PANTHER" id="PTHR11995">
    <property type="entry name" value="NADH DEHYDROGENASE"/>
    <property type="match status" value="1"/>
</dbReference>
<dbReference type="PANTHER" id="PTHR11995:SF14">
    <property type="entry name" value="NADH DEHYDROGENASE [UBIQUINONE] IRON-SULFUR PROTEIN 7, MITOCHONDRIAL"/>
    <property type="match status" value="1"/>
</dbReference>
<dbReference type="Pfam" id="PF01058">
    <property type="entry name" value="Oxidored_q6"/>
    <property type="match status" value="1"/>
</dbReference>
<dbReference type="SUPFAM" id="SSF56770">
    <property type="entry name" value="HydA/Nqo6-like"/>
    <property type="match status" value="1"/>
</dbReference>
<dbReference type="PROSITE" id="PS01150">
    <property type="entry name" value="COMPLEX1_20K"/>
    <property type="match status" value="1"/>
</dbReference>
<sequence length="224" mass="25442">MKYTLTRIDPDAPVERYPQEQRQTVEDPLAQEASRGIMIGRLEEVLQDTVNWGRKNSLWPYNFGISCCYVEMCTAFTSPHDVARFGAEVIRASPRQADFMVIAGTPFIKMAPVIQRLYEQLLEPKWVISMGACANSGGMYDIYSVVQGVDKFLPVDVYIPGCPPRPEAFLQALMLLQDSIGKERRPLSWVVGDQGIYRPQMPAEKDRKRGERINVTNLRTPDEI</sequence>
<gene>
    <name evidence="1" type="primary">nuoB</name>
    <name type="ordered locus">AHA_1781</name>
</gene>
<organism>
    <name type="scientific">Aeromonas hydrophila subsp. hydrophila (strain ATCC 7966 / DSM 30187 / BCRC 13018 / CCUG 14551 / JCM 1027 / KCTC 2358 / NCIMB 9240 / NCTC 8049)</name>
    <dbReference type="NCBI Taxonomy" id="380703"/>
    <lineage>
        <taxon>Bacteria</taxon>
        <taxon>Pseudomonadati</taxon>
        <taxon>Pseudomonadota</taxon>
        <taxon>Gammaproteobacteria</taxon>
        <taxon>Aeromonadales</taxon>
        <taxon>Aeromonadaceae</taxon>
        <taxon>Aeromonas</taxon>
    </lineage>
</organism>
<comment type="function">
    <text evidence="1">NDH-1 shuttles electrons from NADH, via FMN and iron-sulfur (Fe-S) centers, to quinones in the respiratory chain. The immediate electron acceptor for the enzyme in this species is believed to be ubiquinone. Couples the redox reaction to proton translocation (for every two electrons transferred, four hydrogen ions are translocated across the cytoplasmic membrane), and thus conserves the redox energy in a proton gradient.</text>
</comment>
<comment type="catalytic activity">
    <reaction evidence="1">
        <text>a quinone + NADH + 5 H(+)(in) = a quinol + NAD(+) + 4 H(+)(out)</text>
        <dbReference type="Rhea" id="RHEA:57888"/>
        <dbReference type="ChEBI" id="CHEBI:15378"/>
        <dbReference type="ChEBI" id="CHEBI:24646"/>
        <dbReference type="ChEBI" id="CHEBI:57540"/>
        <dbReference type="ChEBI" id="CHEBI:57945"/>
        <dbReference type="ChEBI" id="CHEBI:132124"/>
    </reaction>
</comment>
<comment type="cofactor">
    <cofactor evidence="1">
        <name>[4Fe-4S] cluster</name>
        <dbReference type="ChEBI" id="CHEBI:49883"/>
    </cofactor>
    <text evidence="1">Binds 1 [4Fe-4S] cluster.</text>
</comment>
<comment type="subunit">
    <text evidence="1">NDH-1 is composed of 14 different subunits. Subunits NuoB, C, D, E, F, and G constitute the peripheral sector of the complex.</text>
</comment>
<comment type="subcellular location">
    <subcellularLocation>
        <location evidence="1">Cell inner membrane</location>
        <topology evidence="1">Peripheral membrane protein</topology>
        <orientation evidence="1">Cytoplasmic side</orientation>
    </subcellularLocation>
</comment>
<comment type="similarity">
    <text evidence="1">Belongs to the complex I 20 kDa subunit family.</text>
</comment>
<name>NUOB_AERHH</name>
<keyword id="KW-0004">4Fe-4S</keyword>
<keyword id="KW-0997">Cell inner membrane</keyword>
<keyword id="KW-1003">Cell membrane</keyword>
<keyword id="KW-0408">Iron</keyword>
<keyword id="KW-0411">Iron-sulfur</keyword>
<keyword id="KW-0472">Membrane</keyword>
<keyword id="KW-0479">Metal-binding</keyword>
<keyword id="KW-0520">NAD</keyword>
<keyword id="KW-0874">Quinone</keyword>
<keyword id="KW-1185">Reference proteome</keyword>
<keyword id="KW-1278">Translocase</keyword>
<keyword id="KW-0813">Transport</keyword>
<keyword id="KW-0830">Ubiquinone</keyword>
<protein>
    <recommendedName>
        <fullName evidence="1">NADH-quinone oxidoreductase subunit B</fullName>
        <ecNumber evidence="1">7.1.1.-</ecNumber>
    </recommendedName>
    <alternativeName>
        <fullName evidence="1">NADH dehydrogenase I subunit B</fullName>
    </alternativeName>
    <alternativeName>
        <fullName evidence="1">NDH-1 subunit B</fullName>
    </alternativeName>
</protein>
<feature type="chain" id="PRO_0000376111" description="NADH-quinone oxidoreductase subunit B">
    <location>
        <begin position="1"/>
        <end position="224"/>
    </location>
</feature>
<feature type="region of interest" description="Disordered" evidence="2">
    <location>
        <begin position="202"/>
        <end position="224"/>
    </location>
</feature>
<feature type="compositionally biased region" description="Basic and acidic residues" evidence="2">
    <location>
        <begin position="203"/>
        <end position="212"/>
    </location>
</feature>
<feature type="compositionally biased region" description="Polar residues" evidence="2">
    <location>
        <begin position="214"/>
        <end position="224"/>
    </location>
</feature>
<feature type="binding site" evidence="1">
    <location>
        <position position="67"/>
    </location>
    <ligand>
        <name>[4Fe-4S] cluster</name>
        <dbReference type="ChEBI" id="CHEBI:49883"/>
    </ligand>
</feature>
<feature type="binding site" evidence="1">
    <location>
        <position position="68"/>
    </location>
    <ligand>
        <name>[4Fe-4S] cluster</name>
        <dbReference type="ChEBI" id="CHEBI:49883"/>
    </ligand>
</feature>
<feature type="binding site" evidence="1">
    <location>
        <position position="133"/>
    </location>
    <ligand>
        <name>[4Fe-4S] cluster</name>
        <dbReference type="ChEBI" id="CHEBI:49883"/>
    </ligand>
</feature>
<feature type="binding site" evidence="1">
    <location>
        <position position="162"/>
    </location>
    <ligand>
        <name>[4Fe-4S] cluster</name>
        <dbReference type="ChEBI" id="CHEBI:49883"/>
    </ligand>
</feature>
<evidence type="ECO:0000255" key="1">
    <source>
        <dbReference type="HAMAP-Rule" id="MF_01356"/>
    </source>
</evidence>
<evidence type="ECO:0000256" key="2">
    <source>
        <dbReference type="SAM" id="MobiDB-lite"/>
    </source>
</evidence>
<reference key="1">
    <citation type="journal article" date="2006" name="J. Bacteriol.">
        <title>Genome sequence of Aeromonas hydrophila ATCC 7966T: jack of all trades.</title>
        <authorList>
            <person name="Seshadri R."/>
            <person name="Joseph S.W."/>
            <person name="Chopra A.K."/>
            <person name="Sha J."/>
            <person name="Shaw J."/>
            <person name="Graf J."/>
            <person name="Haft D.H."/>
            <person name="Wu M."/>
            <person name="Ren Q."/>
            <person name="Rosovitz M.J."/>
            <person name="Madupu R."/>
            <person name="Tallon L."/>
            <person name="Kim M."/>
            <person name="Jin S."/>
            <person name="Vuong H."/>
            <person name="Stine O.C."/>
            <person name="Ali A."/>
            <person name="Horneman A.J."/>
            <person name="Heidelberg J.F."/>
        </authorList>
    </citation>
    <scope>NUCLEOTIDE SEQUENCE [LARGE SCALE GENOMIC DNA]</scope>
    <source>
        <strain>ATCC 7966 / DSM 30187 / BCRC 13018 / CCUG 14551 / JCM 1027 / KCTC 2358 / NCIMB 9240 / NCTC 8049</strain>
    </source>
</reference>
<proteinExistence type="inferred from homology"/>